<reference key="1">
    <citation type="journal article" date="1993" name="Insect Mol. Biol.">
        <title>The mitochondrial genome of the mosquito Anopheles gambiae: DNA sequence, genome organization, and comparisons with mitochondrial sequences of other insects.</title>
        <authorList>
            <person name="Beard C.B."/>
            <person name="Hamm D.M."/>
            <person name="Collins F.H."/>
        </authorList>
    </citation>
    <scope>NUCLEOTIDE SEQUENCE [LARGE SCALE GENOMIC DNA]</scope>
    <source>
        <strain>G3</strain>
    </source>
</reference>
<accession>P34848</accession>
<protein>
    <recommendedName>
        <fullName>NADH-ubiquinone oxidoreductase chain 2</fullName>
        <ecNumber>7.1.1.2</ecNumber>
    </recommendedName>
    <alternativeName>
        <fullName>NADH dehydrogenase subunit 2</fullName>
    </alternativeName>
</protein>
<keyword id="KW-0249">Electron transport</keyword>
<keyword id="KW-0472">Membrane</keyword>
<keyword id="KW-0496">Mitochondrion</keyword>
<keyword id="KW-0999">Mitochondrion inner membrane</keyword>
<keyword id="KW-0520">NAD</keyword>
<keyword id="KW-1185">Reference proteome</keyword>
<keyword id="KW-0679">Respiratory chain</keyword>
<keyword id="KW-1278">Translocase</keyword>
<keyword id="KW-0812">Transmembrane</keyword>
<keyword id="KW-1133">Transmembrane helix</keyword>
<keyword id="KW-0813">Transport</keyword>
<keyword id="KW-0830">Ubiquinone</keyword>
<organism>
    <name type="scientific">Anopheles gambiae</name>
    <name type="common">African malaria mosquito</name>
    <dbReference type="NCBI Taxonomy" id="7165"/>
    <lineage>
        <taxon>Eukaryota</taxon>
        <taxon>Metazoa</taxon>
        <taxon>Ecdysozoa</taxon>
        <taxon>Arthropoda</taxon>
        <taxon>Hexapoda</taxon>
        <taxon>Insecta</taxon>
        <taxon>Pterygota</taxon>
        <taxon>Neoptera</taxon>
        <taxon>Endopterygota</taxon>
        <taxon>Diptera</taxon>
        <taxon>Nematocera</taxon>
        <taxon>Culicoidea</taxon>
        <taxon>Culicidae</taxon>
        <taxon>Anophelinae</taxon>
        <taxon>Anopheles</taxon>
    </lineage>
</organism>
<dbReference type="EC" id="7.1.1.2"/>
<dbReference type="EMBL" id="L20934">
    <property type="protein sequence ID" value="AAD12190.1"/>
    <property type="molecule type" value="Genomic_DNA"/>
</dbReference>
<dbReference type="PIR" id="T09800">
    <property type="entry name" value="T09800"/>
</dbReference>
<dbReference type="RefSeq" id="NP_008069.1">
    <property type="nucleotide sequence ID" value="NC_002084.1"/>
</dbReference>
<dbReference type="SMR" id="P34848"/>
<dbReference type="FunCoup" id="P34848">
    <property type="interactions" value="129"/>
</dbReference>
<dbReference type="STRING" id="7165.P34848"/>
<dbReference type="PaxDb" id="7165-AGAP028360-PA"/>
<dbReference type="VEuPathDB" id="VectorBase:AGAMI1_012655"/>
<dbReference type="VEuPathDB" id="VectorBase:AGAP028360"/>
<dbReference type="eggNOG" id="KOG4668">
    <property type="taxonomic scope" value="Eukaryota"/>
</dbReference>
<dbReference type="HOGENOM" id="CLU_007100_1_3_1"/>
<dbReference type="InParanoid" id="P34848"/>
<dbReference type="OMA" id="HFWVPEV"/>
<dbReference type="Proteomes" id="UP000007062">
    <property type="component" value="Mitochondrion"/>
</dbReference>
<dbReference type="GO" id="GO:0005743">
    <property type="term" value="C:mitochondrial inner membrane"/>
    <property type="evidence" value="ECO:0007669"/>
    <property type="project" value="UniProtKB-SubCell"/>
</dbReference>
<dbReference type="GO" id="GO:0045271">
    <property type="term" value="C:respiratory chain complex I"/>
    <property type="evidence" value="ECO:0000318"/>
    <property type="project" value="GO_Central"/>
</dbReference>
<dbReference type="GO" id="GO:0008137">
    <property type="term" value="F:NADH dehydrogenase (ubiquinone) activity"/>
    <property type="evidence" value="ECO:0000318"/>
    <property type="project" value="GO_Central"/>
</dbReference>
<dbReference type="GO" id="GO:0006120">
    <property type="term" value="P:mitochondrial electron transport, NADH to ubiquinone"/>
    <property type="evidence" value="ECO:0000318"/>
    <property type="project" value="GO_Central"/>
</dbReference>
<dbReference type="InterPro" id="IPR050175">
    <property type="entry name" value="Complex_I_Subunit_2"/>
</dbReference>
<dbReference type="InterPro" id="IPR010933">
    <property type="entry name" value="NADH_DH_su2_C"/>
</dbReference>
<dbReference type="InterPro" id="IPR003917">
    <property type="entry name" value="NADH_UbQ_OxRdtase_chain2"/>
</dbReference>
<dbReference type="InterPro" id="IPR001750">
    <property type="entry name" value="ND/Mrp_TM"/>
</dbReference>
<dbReference type="PANTHER" id="PTHR46552">
    <property type="entry name" value="NADH-UBIQUINONE OXIDOREDUCTASE CHAIN 2"/>
    <property type="match status" value="1"/>
</dbReference>
<dbReference type="PANTHER" id="PTHR46552:SF1">
    <property type="entry name" value="NADH-UBIQUINONE OXIDOREDUCTASE CHAIN 2"/>
    <property type="match status" value="1"/>
</dbReference>
<dbReference type="Pfam" id="PF06444">
    <property type="entry name" value="NADH_dehy_S2_C"/>
    <property type="match status" value="1"/>
</dbReference>
<dbReference type="Pfam" id="PF00361">
    <property type="entry name" value="Proton_antipo_M"/>
    <property type="match status" value="1"/>
</dbReference>
<dbReference type="PRINTS" id="PR01436">
    <property type="entry name" value="NADHDHGNASE2"/>
</dbReference>
<sequence>MKKISNNIFLIMLIFGTLVTISSNSWLGAWMGLEINLLSFIPLMNDNKKNLLTSESSLKYFLTQAFASSILLFAIIMLMFLYNNNLSLYNSFNEILILSTLLLKSGAAPFHFWFPEVMEGLSWVNGLILMTWQKIAPLMLISYNFIYNFFMISIILSMLIGSLGGLNQTSIRKLMAFSSINHLGWMLLAMMNNEMLWMTYFLMYSLLSFSIVLMFNNFKLFYFNQIFNLSMMNPIIKLLIFLNLLSLGGLPPFLGFLPKWLVIQNLTAMNQLFILTISVCLTLITLYFYLRLSYSIFMLNYQKNSWMLKNNFNNKMSSISLIFNFISIGGLVMISMIYIIM</sequence>
<feature type="chain" id="PRO_0000117548" description="NADH-ubiquinone oxidoreductase chain 2">
    <location>
        <begin position="1"/>
        <end position="341"/>
    </location>
</feature>
<feature type="transmembrane region" description="Helical" evidence="2">
    <location>
        <begin position="8"/>
        <end position="28"/>
    </location>
</feature>
<feature type="transmembrane region" description="Helical" evidence="2">
    <location>
        <begin position="61"/>
        <end position="81"/>
    </location>
</feature>
<feature type="transmembrane region" description="Helical" evidence="2">
    <location>
        <begin position="95"/>
        <end position="115"/>
    </location>
</feature>
<feature type="transmembrane region" description="Helical" evidence="2">
    <location>
        <begin position="145"/>
        <end position="165"/>
    </location>
</feature>
<feature type="transmembrane region" description="Helical" evidence="2">
    <location>
        <begin position="174"/>
        <end position="191"/>
    </location>
</feature>
<feature type="transmembrane region" description="Helical" evidence="2">
    <location>
        <begin position="195"/>
        <end position="215"/>
    </location>
</feature>
<feature type="transmembrane region" description="Helical" evidence="2">
    <location>
        <begin position="238"/>
        <end position="258"/>
    </location>
</feature>
<feature type="transmembrane region" description="Helical" evidence="2">
    <location>
        <begin position="272"/>
        <end position="292"/>
    </location>
</feature>
<feature type="transmembrane region" description="Helical" evidence="2">
    <location>
        <begin position="321"/>
        <end position="341"/>
    </location>
</feature>
<name>NU2M_ANOGA</name>
<evidence type="ECO:0000250" key="1"/>
<evidence type="ECO:0000255" key="2"/>
<evidence type="ECO:0000305" key="3"/>
<gene>
    <name type="primary">mt:ND2</name>
    <name type="synonym">ND2</name>
</gene>
<geneLocation type="mitochondrion"/>
<proteinExistence type="inferred from homology"/>
<comment type="function">
    <text evidence="1">Core subunit of the mitochondrial membrane respiratory chain NADH dehydrogenase (Complex I) that is believed to belong to the minimal assembly required for catalysis. Complex I functions in the transfer of electrons from NADH to the respiratory chain. The immediate electron acceptor for the enzyme is believed to be ubiquinone (By similarity).</text>
</comment>
<comment type="catalytic activity">
    <reaction>
        <text>a ubiquinone + NADH + 5 H(+)(in) = a ubiquinol + NAD(+) + 4 H(+)(out)</text>
        <dbReference type="Rhea" id="RHEA:29091"/>
        <dbReference type="Rhea" id="RHEA-COMP:9565"/>
        <dbReference type="Rhea" id="RHEA-COMP:9566"/>
        <dbReference type="ChEBI" id="CHEBI:15378"/>
        <dbReference type="ChEBI" id="CHEBI:16389"/>
        <dbReference type="ChEBI" id="CHEBI:17976"/>
        <dbReference type="ChEBI" id="CHEBI:57540"/>
        <dbReference type="ChEBI" id="CHEBI:57945"/>
        <dbReference type="EC" id="7.1.1.2"/>
    </reaction>
</comment>
<comment type="subcellular location">
    <subcellularLocation>
        <location>Mitochondrion inner membrane</location>
        <topology>Multi-pass membrane protein</topology>
    </subcellularLocation>
</comment>
<comment type="similarity">
    <text evidence="3">Belongs to the complex I subunit 2 family.</text>
</comment>